<evidence type="ECO:0000255" key="1">
    <source>
        <dbReference type="HAMAP-Rule" id="MF_01539"/>
    </source>
</evidence>
<evidence type="ECO:0000305" key="2"/>
<reference key="1">
    <citation type="journal article" date="2003" name="Nature">
        <title>Genome sequence of Bacillus cereus and comparative analysis with Bacillus anthracis.</title>
        <authorList>
            <person name="Ivanova N."/>
            <person name="Sorokin A."/>
            <person name="Anderson I."/>
            <person name="Galleron N."/>
            <person name="Candelon B."/>
            <person name="Kapatral V."/>
            <person name="Bhattacharyya A."/>
            <person name="Reznik G."/>
            <person name="Mikhailova N."/>
            <person name="Lapidus A."/>
            <person name="Chu L."/>
            <person name="Mazur M."/>
            <person name="Goltsman E."/>
            <person name="Larsen N."/>
            <person name="D'Souza M."/>
            <person name="Walunas T."/>
            <person name="Grechkin Y."/>
            <person name="Pusch G."/>
            <person name="Haselkorn R."/>
            <person name="Fonstein M."/>
            <person name="Ehrlich S.D."/>
            <person name="Overbeek R."/>
            <person name="Kyrpides N.C."/>
        </authorList>
    </citation>
    <scope>NUCLEOTIDE SEQUENCE [LARGE SCALE GENOMIC DNA]</scope>
    <source>
        <strain>ATCC 14579 / DSM 31 / CCUG 7414 / JCM 2152 / NBRC 15305 / NCIMB 9373 / NCTC 2599 / NRRL B-3711</strain>
    </source>
</reference>
<gene>
    <name evidence="1" type="primary">tmcAL</name>
    <name type="ordered locus">BC_3925</name>
</gene>
<proteinExistence type="inferred from homology"/>
<protein>
    <recommendedName>
        <fullName evidence="1">tRNA(Met) cytidine acetate ligase</fullName>
        <ecNumber evidence="1">6.3.4.-</ecNumber>
    </recommendedName>
</protein>
<accession>P0C0A4</accession>
<dbReference type="EC" id="6.3.4.-" evidence="1"/>
<dbReference type="EMBL" id="AE016877">
    <property type="status" value="NOT_ANNOTATED_CDS"/>
    <property type="molecule type" value="Genomic_DNA"/>
</dbReference>
<dbReference type="RefSeq" id="WP_033685264.1">
    <property type="nucleotide sequence ID" value="NZ_CAKJWD010000006.1"/>
</dbReference>
<dbReference type="SMR" id="P0C0A4"/>
<dbReference type="Proteomes" id="UP000001417">
    <property type="component" value="Chromosome"/>
</dbReference>
<dbReference type="GO" id="GO:0005737">
    <property type="term" value="C:cytoplasm"/>
    <property type="evidence" value="ECO:0007669"/>
    <property type="project" value="UniProtKB-SubCell"/>
</dbReference>
<dbReference type="GO" id="GO:0005524">
    <property type="term" value="F:ATP binding"/>
    <property type="evidence" value="ECO:0007669"/>
    <property type="project" value="UniProtKB-KW"/>
</dbReference>
<dbReference type="GO" id="GO:0016879">
    <property type="term" value="F:ligase activity, forming carbon-nitrogen bonds"/>
    <property type="evidence" value="ECO:0007669"/>
    <property type="project" value="UniProtKB-UniRule"/>
</dbReference>
<dbReference type="GO" id="GO:0000049">
    <property type="term" value="F:tRNA binding"/>
    <property type="evidence" value="ECO:0007669"/>
    <property type="project" value="UniProtKB-KW"/>
</dbReference>
<dbReference type="GO" id="GO:0006400">
    <property type="term" value="P:tRNA modification"/>
    <property type="evidence" value="ECO:0007669"/>
    <property type="project" value="UniProtKB-UniRule"/>
</dbReference>
<dbReference type="Gene3D" id="3.40.50.620">
    <property type="entry name" value="HUPs"/>
    <property type="match status" value="1"/>
</dbReference>
<dbReference type="HAMAP" id="MF_01539">
    <property type="entry name" value="TmcAL"/>
    <property type="match status" value="1"/>
</dbReference>
<dbReference type="InterPro" id="IPR014729">
    <property type="entry name" value="Rossmann-like_a/b/a_fold"/>
</dbReference>
<dbReference type="InterPro" id="IPR008513">
    <property type="entry name" value="tRNA(Met)_cyd_acetate_ligase"/>
</dbReference>
<dbReference type="NCBIfam" id="NF010191">
    <property type="entry name" value="PRK13670.1"/>
    <property type="match status" value="1"/>
</dbReference>
<dbReference type="PANTHER" id="PTHR37825">
    <property type="entry name" value="TRNA(MET) CYTIDINE ACETATE LIGASE"/>
    <property type="match status" value="1"/>
</dbReference>
<dbReference type="PANTHER" id="PTHR37825:SF1">
    <property type="entry name" value="TRNA(MET) CYTIDINE ACETATE LIGASE"/>
    <property type="match status" value="1"/>
</dbReference>
<dbReference type="Pfam" id="PF05636">
    <property type="entry name" value="HIGH_NTase1"/>
    <property type="match status" value="1"/>
</dbReference>
<dbReference type="SUPFAM" id="SSF52374">
    <property type="entry name" value="Nucleotidylyl transferase"/>
    <property type="match status" value="1"/>
</dbReference>
<organism>
    <name type="scientific">Bacillus cereus (strain ATCC 14579 / DSM 31 / CCUG 7414 / JCM 2152 / NBRC 15305 / NCIMB 9373 / NCTC 2599 / NRRL B-3711)</name>
    <dbReference type="NCBI Taxonomy" id="226900"/>
    <lineage>
        <taxon>Bacteria</taxon>
        <taxon>Bacillati</taxon>
        <taxon>Bacillota</taxon>
        <taxon>Bacilli</taxon>
        <taxon>Bacillales</taxon>
        <taxon>Bacillaceae</taxon>
        <taxon>Bacillus</taxon>
        <taxon>Bacillus cereus group</taxon>
    </lineage>
</organism>
<sequence>MQQTKKLTQSDIIIAVMSGPFLQRGEPALISKWYRTKMALANGVDLVVELPYVFATQKAETFANGAISILNALRVSEICFGSEDGQIENFYNTISIQKNEEETFNCLVKQFMDAGNSYAKATSDAFSHILTSEKNIDMSQPNNILGFQYMKAILSQNSSIQAQTIKRFASHYHDETFNDQHIASATSIRKQLFSEEGSFTTIEPFLPQATTSLLANYKQNYGILHNWEQYFSFFKYRLMTMSPGDLRHIYEIEEGLEHRILSKIQNSSSFYSFMEALKTKRYTWTRLQRACTHILTNTTKEDIRSANIEQHAPYIRLLGMSQKGQTYLSKNKKKIELPILTHTKTFDHVALDIEKKANSVYFSIMHEPLRTQLLKQDITHHPIRYDETTTKFL</sequence>
<comment type="function">
    <text evidence="1">Catalyzes the formation of N(4)-acetylcytidine (ac(4)C) at the wobble position of elongator tRNA(Met), using acetate and ATP as substrates. First activates an acetate ion to form acetyladenylate (Ac-AMP) and then transfers the acetyl group to tRNA to form ac(4)C34.</text>
</comment>
<comment type="catalytic activity">
    <reaction evidence="1">
        <text>cytidine(34) in elongator tRNA(Met) + acetate + ATP = N(4)-acetylcytidine(34) in elongator tRNA(Met) + AMP + diphosphate</text>
        <dbReference type="Rhea" id="RHEA:58144"/>
        <dbReference type="Rhea" id="RHEA-COMP:10693"/>
        <dbReference type="Rhea" id="RHEA-COMP:10694"/>
        <dbReference type="ChEBI" id="CHEBI:30089"/>
        <dbReference type="ChEBI" id="CHEBI:30616"/>
        <dbReference type="ChEBI" id="CHEBI:33019"/>
        <dbReference type="ChEBI" id="CHEBI:74900"/>
        <dbReference type="ChEBI" id="CHEBI:82748"/>
        <dbReference type="ChEBI" id="CHEBI:456215"/>
    </reaction>
</comment>
<comment type="subcellular location">
    <subcellularLocation>
        <location evidence="1">Cytoplasm</location>
    </subcellularLocation>
</comment>
<comment type="similarity">
    <text evidence="1">Belongs to the TmcAL family.</text>
</comment>
<comment type="sequence caution" evidence="2">
    <conflict type="erroneous termination">
        <sequence resource="EMBL" id="AE016877"/>
    </conflict>
    <text>Truncated C-terminus.</text>
</comment>
<keyword id="KW-0067">ATP-binding</keyword>
<keyword id="KW-0963">Cytoplasm</keyword>
<keyword id="KW-0436">Ligase</keyword>
<keyword id="KW-0547">Nucleotide-binding</keyword>
<keyword id="KW-1185">Reference proteome</keyword>
<keyword id="KW-0694">RNA-binding</keyword>
<keyword id="KW-0819">tRNA processing</keyword>
<keyword id="KW-0820">tRNA-binding</keyword>
<name>TMCAL_BACCR</name>
<feature type="chain" id="PRO_0000147154" description="tRNA(Met) cytidine acetate ligase">
    <location>
        <begin position="1"/>
        <end position="393"/>
    </location>
</feature>
<feature type="binding site" evidence="1">
    <location>
        <position position="81"/>
    </location>
    <ligand>
        <name>ATP</name>
        <dbReference type="ChEBI" id="CHEBI:30616"/>
    </ligand>
</feature>
<feature type="binding site" evidence="1">
    <location>
        <position position="142"/>
    </location>
    <ligand>
        <name>ATP</name>
        <dbReference type="ChEBI" id="CHEBI:30616"/>
    </ligand>
</feature>
<feature type="binding site" evidence="1">
    <location>
        <position position="167"/>
    </location>
    <ligand>
        <name>ATP</name>
        <dbReference type="ChEBI" id="CHEBI:30616"/>
    </ligand>
</feature>